<accession>B0KW86</accession>
<feature type="initiator methionine" description="Removed" evidence="2">
    <location>
        <position position="1"/>
    </location>
</feature>
<feature type="chain" id="PRO_0000329454" description="Proteasome assembly chaperone 1">
    <location>
        <begin position="2"/>
        <end position="288"/>
    </location>
</feature>
<feature type="region of interest" description="Disordered" evidence="3">
    <location>
        <begin position="1"/>
        <end position="37"/>
    </location>
</feature>
<feature type="compositionally biased region" description="Basic and acidic residues" evidence="3">
    <location>
        <begin position="26"/>
        <end position="37"/>
    </location>
</feature>
<feature type="modified residue" description="N-acetylalanine" evidence="2">
    <location>
        <position position="2"/>
    </location>
</feature>
<feature type="modified residue" description="Phosphothreonine" evidence="2">
    <location>
        <position position="18"/>
    </location>
</feature>
<feature type="modified residue" description="Phosphothreonine" evidence="2">
    <location>
        <position position="54"/>
    </location>
</feature>
<feature type="modified residue" description="Phosphoserine" evidence="2">
    <location>
        <position position="180"/>
    </location>
</feature>
<feature type="modified residue" description="N6-acetyllysine" evidence="2">
    <location>
        <position position="264"/>
    </location>
</feature>
<comment type="function">
    <text evidence="1">Chaperone protein which promotes assembly of the 20S proteasome as part of a heterodimer with PSMG2. The PSMG1-PSMG2 heterodimer binds to the PSMA5 and PSMA7 proteasome subunits, promotes assembly of the proteasome alpha subunits into the heteroheptameric alpha ring and prevents alpha ring dimerization (By similarity).</text>
</comment>
<comment type="subunit">
    <text evidence="1">Forms a heterodimer with PSMG2. The PSMG1-PSMG2 heterodimer interacts directly with the PSMA5 and PSMA7 proteasome alpha subunits (By similarity).</text>
</comment>
<comment type="subcellular location">
    <subcellularLocation>
        <location evidence="1">Cytoplasm</location>
    </subcellularLocation>
    <subcellularLocation>
        <location evidence="1">Endoplasmic reticulum</location>
    </subcellularLocation>
</comment>
<comment type="PTM">
    <text evidence="1">Degraded by the proteasome upon completion of 20S proteasome maturation.</text>
</comment>
<comment type="similarity">
    <text evidence="4">Belongs to the PSMG1 family.</text>
</comment>
<keyword id="KW-0007">Acetylation</keyword>
<keyword id="KW-0143">Chaperone</keyword>
<keyword id="KW-0963">Cytoplasm</keyword>
<keyword id="KW-0256">Endoplasmic reticulum</keyword>
<keyword id="KW-0597">Phosphoprotein</keyword>
<keyword id="KW-1185">Reference proteome</keyword>
<organism>
    <name type="scientific">Callithrix jacchus</name>
    <name type="common">White-tufted-ear marmoset</name>
    <dbReference type="NCBI Taxonomy" id="9483"/>
    <lineage>
        <taxon>Eukaryota</taxon>
        <taxon>Metazoa</taxon>
        <taxon>Chordata</taxon>
        <taxon>Craniata</taxon>
        <taxon>Vertebrata</taxon>
        <taxon>Euteleostomi</taxon>
        <taxon>Mammalia</taxon>
        <taxon>Eutheria</taxon>
        <taxon>Euarchontoglires</taxon>
        <taxon>Primates</taxon>
        <taxon>Haplorrhini</taxon>
        <taxon>Platyrrhini</taxon>
        <taxon>Cebidae</taxon>
        <taxon>Callitrichinae</taxon>
        <taxon>Callithrix</taxon>
        <taxon>Callithrix</taxon>
    </lineage>
</organism>
<proteinExistence type="inferred from homology"/>
<dbReference type="EMBL" id="DP000566">
    <property type="protein sequence ID" value="ABY79109.1"/>
    <property type="molecule type" value="Genomic_DNA"/>
</dbReference>
<dbReference type="RefSeq" id="XP_002761471.1">
    <property type="nucleotide sequence ID" value="XM_002761425.5"/>
</dbReference>
<dbReference type="SMR" id="B0KW86"/>
<dbReference type="FunCoup" id="B0KW86">
    <property type="interactions" value="2075"/>
</dbReference>
<dbReference type="STRING" id="9483.ENSCJAP00000027701"/>
<dbReference type="Ensembl" id="ENSCJAT00000029274.4">
    <property type="protein sequence ID" value="ENSCJAP00000027701.2"/>
    <property type="gene ID" value="ENSCJAG00000015016.4"/>
</dbReference>
<dbReference type="GeneID" id="100398558"/>
<dbReference type="KEGG" id="cjc:100398558"/>
<dbReference type="CTD" id="8624"/>
<dbReference type="eggNOG" id="ENOG502QTPH">
    <property type="taxonomic scope" value="Eukaryota"/>
</dbReference>
<dbReference type="GeneTree" id="ENSGT00500000044950"/>
<dbReference type="HOGENOM" id="CLU_083637_0_0_1"/>
<dbReference type="InParanoid" id="B0KW86"/>
<dbReference type="OMA" id="SVLICQV"/>
<dbReference type="OrthoDB" id="17536at2759"/>
<dbReference type="TreeFam" id="TF331909"/>
<dbReference type="Proteomes" id="UP000008225">
    <property type="component" value="Chromosome 21"/>
</dbReference>
<dbReference type="Bgee" id="ENSCJAG00000015016">
    <property type="expression patterns" value="Expressed in ovary and 6 other cell types or tissues"/>
</dbReference>
<dbReference type="GO" id="GO:0005829">
    <property type="term" value="C:cytosol"/>
    <property type="evidence" value="ECO:0007669"/>
    <property type="project" value="Ensembl"/>
</dbReference>
<dbReference type="GO" id="GO:0005783">
    <property type="term" value="C:endoplasmic reticulum"/>
    <property type="evidence" value="ECO:0007669"/>
    <property type="project" value="UniProtKB-SubCell"/>
</dbReference>
<dbReference type="GO" id="GO:0005794">
    <property type="term" value="C:Golgi apparatus"/>
    <property type="evidence" value="ECO:0007669"/>
    <property type="project" value="Ensembl"/>
</dbReference>
<dbReference type="GO" id="GO:0005654">
    <property type="term" value="C:nucleoplasm"/>
    <property type="evidence" value="ECO:0007669"/>
    <property type="project" value="Ensembl"/>
</dbReference>
<dbReference type="GO" id="GO:0101031">
    <property type="term" value="C:protein folding chaperone complex"/>
    <property type="evidence" value="ECO:0007669"/>
    <property type="project" value="Ensembl"/>
</dbReference>
<dbReference type="GO" id="GO:0060090">
    <property type="term" value="F:molecular adaptor activity"/>
    <property type="evidence" value="ECO:0007669"/>
    <property type="project" value="Ensembl"/>
</dbReference>
<dbReference type="GO" id="GO:0070628">
    <property type="term" value="F:proteasome binding"/>
    <property type="evidence" value="ECO:0007669"/>
    <property type="project" value="Ensembl"/>
</dbReference>
<dbReference type="GO" id="GO:0021930">
    <property type="term" value="P:cerebellar granule cell precursor proliferation"/>
    <property type="evidence" value="ECO:0007669"/>
    <property type="project" value="Ensembl"/>
</dbReference>
<dbReference type="GO" id="GO:0051131">
    <property type="term" value="P:chaperone-mediated protein complex assembly"/>
    <property type="evidence" value="ECO:0007669"/>
    <property type="project" value="Ensembl"/>
</dbReference>
<dbReference type="GO" id="GO:0080129">
    <property type="term" value="P:proteasome core complex assembly"/>
    <property type="evidence" value="ECO:0007669"/>
    <property type="project" value="Ensembl"/>
</dbReference>
<dbReference type="InterPro" id="IPR016565">
    <property type="entry name" value="Proteasome_assmbl_chp_1"/>
</dbReference>
<dbReference type="PANTHER" id="PTHR15069">
    <property type="entry name" value="PROTEASOME ASSEMBLY CHAPERONE 1"/>
    <property type="match status" value="1"/>
</dbReference>
<dbReference type="PANTHER" id="PTHR15069:SF1">
    <property type="entry name" value="PROTEASOME ASSEMBLY CHAPERONE 1"/>
    <property type="match status" value="1"/>
</dbReference>
<dbReference type="Pfam" id="PF16094">
    <property type="entry name" value="PAC1"/>
    <property type="match status" value="1"/>
</dbReference>
<dbReference type="PIRSF" id="PIRSF010076">
    <property type="entry name" value="Psome_chaperone-1"/>
    <property type="match status" value="1"/>
</dbReference>
<evidence type="ECO:0000250" key="1"/>
<evidence type="ECO:0000250" key="2">
    <source>
        <dbReference type="UniProtKB" id="O95456"/>
    </source>
</evidence>
<evidence type="ECO:0000256" key="3">
    <source>
        <dbReference type="SAM" id="MobiDB-lite"/>
    </source>
</evidence>
<evidence type="ECO:0000305" key="4"/>
<sequence length="288" mass="32849">MAATFFGEVVKAPCRAGTEDEEEEDEGRRETPEDREVRQQLARKREVRLLRRQTKTSLEVSLLEKYPCSKFIIAIGNNAVAFLSSFVMNSGVWEEVGCAKLWNEWCRTTDTIHLSSTEAFCVFYHLKSNPSVFLCQCSCYVAEDQQYQWLEKVFGSCPRKNMQITILTCRHVTDYKTSESTGSLPSPFLKALKTQNFKDPACCPLLEQPNIVHDLPAAVLSYCQVWKIPAILYLCYTDVMKLDLITVEAFKPLLSTRSLKGLVKNIPQSTEILKKLMTTNEIQSNIYT</sequence>
<gene>
    <name type="primary">PSMG1</name>
</gene>
<reference key="1">
    <citation type="submission" date="2008-01" db="EMBL/GenBank/DDBJ databases">
        <title>NISC comparative sequencing initiative.</title>
        <authorList>
            <person name="Antonellis A."/>
            <person name="Benjamin B."/>
            <person name="Blakesley R.W."/>
            <person name="Bouffard G.G."/>
            <person name="Brinkley C."/>
            <person name="Brooks S."/>
            <person name="Chu G."/>
            <person name="Chub I."/>
            <person name="Coleman H."/>
            <person name="Fuksenko T."/>
            <person name="Gestole M."/>
            <person name="Gregory M."/>
            <person name="Guan X."/>
            <person name="Gupta J."/>
            <person name="Gurson N."/>
            <person name="Han E."/>
            <person name="Han J."/>
            <person name="Hansen N."/>
            <person name="Hargrove A."/>
            <person name="Hines-Harris K."/>
            <person name="Ho S.-L."/>
            <person name="Hu P."/>
            <person name="Hunter G."/>
            <person name="Hurle B."/>
            <person name="Idol J.R."/>
            <person name="Johnson T."/>
            <person name="Knight E."/>
            <person name="Kwong P."/>
            <person name="Lee-Lin S.-Q."/>
            <person name="Legaspi R."/>
            <person name="Madden M."/>
            <person name="Maduro Q.L."/>
            <person name="Maduro V.B."/>
            <person name="Margulies E.H."/>
            <person name="Masiello C."/>
            <person name="Maskeri B."/>
            <person name="McDowell J."/>
            <person name="Merkulov G."/>
            <person name="Montemayor C."/>
            <person name="Mullikin J.C."/>
            <person name="Park M."/>
            <person name="Prasad A."/>
            <person name="Ramsahoye C."/>
            <person name="Reddix-Dugue N."/>
            <person name="Riebow N."/>
            <person name="Schandler K."/>
            <person name="Schueler M.G."/>
            <person name="Sison C."/>
            <person name="Smith L."/>
            <person name="Stantripop S."/>
            <person name="Thomas J.W."/>
            <person name="Thomas P.J."/>
            <person name="Tsipouri V."/>
            <person name="Young A."/>
            <person name="Green E.D."/>
        </authorList>
    </citation>
    <scope>NUCLEOTIDE SEQUENCE [LARGE SCALE GENOMIC DNA]</scope>
</reference>
<protein>
    <recommendedName>
        <fullName>Proteasome assembly chaperone 1</fullName>
    </recommendedName>
</protein>
<name>PSMG1_CALJA</name>